<gene>
    <name type="primary">petE</name>
</gene>
<organism>
    <name type="scientific">Microcystis aeruginosa</name>
    <dbReference type="NCBI Taxonomy" id="1126"/>
    <lineage>
        <taxon>Bacteria</taxon>
        <taxon>Bacillati</taxon>
        <taxon>Cyanobacteriota</taxon>
        <taxon>Cyanophyceae</taxon>
        <taxon>Oscillatoriophycideae</taxon>
        <taxon>Chroococcales</taxon>
        <taxon>Microcystaceae</taxon>
        <taxon>Microcystis</taxon>
    </lineage>
</organism>
<reference key="1">
    <citation type="journal article" date="1989" name="Biochim. Biophys. Acta">
        <title>Purification of an acidic plastocyanin from Microcystis aeruginosa.</title>
        <authorList>
            <person name="Tan S."/>
            <person name="Ho K.-K."/>
        </authorList>
    </citation>
    <scope>PROTEIN SEQUENCE</scope>
    <scope>SUBCELLULAR LOCATION</scope>
</reference>
<sequence>ETFTVKMGGDAGTLQ</sequence>
<proteinExistence type="evidence at protein level"/>
<feature type="chain" id="PRO_0000085581" description="Plastocyanin">
    <location>
        <begin position="1"/>
        <end position="15" status="greater than"/>
    </location>
</feature>
<feature type="non-terminal residue">
    <location>
        <position position="15"/>
    </location>
</feature>
<keyword id="KW-0186">Copper</keyword>
<keyword id="KW-0903">Direct protein sequencing</keyword>
<keyword id="KW-0249">Electron transport</keyword>
<keyword id="KW-0472">Membrane</keyword>
<keyword id="KW-0479">Metal-binding</keyword>
<keyword id="KW-0793">Thylakoid</keyword>
<keyword id="KW-0813">Transport</keyword>
<protein>
    <recommendedName>
        <fullName>Plastocyanin</fullName>
    </recommendedName>
</protein>
<comment type="function">
    <text evidence="1">Participates in electron transfer between P700 and the cytochrome b6-f complex in photosystem I.</text>
</comment>
<comment type="cofactor">
    <cofactor evidence="1">
        <name>Cu(2+)</name>
        <dbReference type="ChEBI" id="CHEBI:29036"/>
    </cofactor>
</comment>
<comment type="subcellular location">
    <subcellularLocation>
        <location evidence="1 2">Cellular thylakoid membrane</location>
        <topology evidence="1">Peripheral membrane protein</topology>
        <orientation evidence="1">Lumenal side</orientation>
    </subcellularLocation>
    <text>Loosely bound to the thylakoid inner membrane surface.</text>
</comment>
<comment type="similarity">
    <text evidence="1">Belongs to the plastocyanin family.</text>
</comment>
<accession>P10625</accession>
<name>PLAS_MICAE</name>
<evidence type="ECO:0000255" key="1">
    <source>
        <dbReference type="HAMAP-Rule" id="MF_00566"/>
    </source>
</evidence>
<evidence type="ECO:0000269" key="2">
    <source>
    </source>
</evidence>
<dbReference type="PIR" id="S03353">
    <property type="entry name" value="S03353"/>
</dbReference>
<dbReference type="GO" id="GO:0031676">
    <property type="term" value="C:plasma membrane-derived thylakoid membrane"/>
    <property type="evidence" value="ECO:0007669"/>
    <property type="project" value="UniProtKB-SubCell"/>
</dbReference>
<dbReference type="GO" id="GO:0046872">
    <property type="term" value="F:metal ion binding"/>
    <property type="evidence" value="ECO:0007669"/>
    <property type="project" value="UniProtKB-KW"/>
</dbReference>